<organism>
    <name type="scientific">Halorhodospira halophila (strain DSM 244 / SL1)</name>
    <name type="common">Ectothiorhodospira halophila (strain DSM 244 / SL1)</name>
    <dbReference type="NCBI Taxonomy" id="349124"/>
    <lineage>
        <taxon>Bacteria</taxon>
        <taxon>Pseudomonadati</taxon>
        <taxon>Pseudomonadota</taxon>
        <taxon>Gammaproteobacteria</taxon>
        <taxon>Chromatiales</taxon>
        <taxon>Ectothiorhodospiraceae</taxon>
        <taxon>Halorhodospira</taxon>
    </lineage>
</organism>
<comment type="function">
    <text evidence="1">Multifunctional enzyme that catalyzes the SAM-dependent methylations of uroporphyrinogen III at position C-2 and C-7 to form precorrin-2 via precorrin-1. Then it catalyzes the NAD-dependent ring dehydrogenation of precorrin-2 to yield sirohydrochlorin. Finally, it catalyzes the ferrochelation of sirohydrochlorin to yield siroheme.</text>
</comment>
<comment type="catalytic activity">
    <reaction evidence="1">
        <text>uroporphyrinogen III + 2 S-adenosyl-L-methionine = precorrin-2 + 2 S-adenosyl-L-homocysteine + H(+)</text>
        <dbReference type="Rhea" id="RHEA:32459"/>
        <dbReference type="ChEBI" id="CHEBI:15378"/>
        <dbReference type="ChEBI" id="CHEBI:57308"/>
        <dbReference type="ChEBI" id="CHEBI:57856"/>
        <dbReference type="ChEBI" id="CHEBI:58827"/>
        <dbReference type="ChEBI" id="CHEBI:59789"/>
        <dbReference type="EC" id="2.1.1.107"/>
    </reaction>
</comment>
<comment type="catalytic activity">
    <reaction evidence="1">
        <text>precorrin-2 + NAD(+) = sirohydrochlorin + NADH + 2 H(+)</text>
        <dbReference type="Rhea" id="RHEA:15613"/>
        <dbReference type="ChEBI" id="CHEBI:15378"/>
        <dbReference type="ChEBI" id="CHEBI:57540"/>
        <dbReference type="ChEBI" id="CHEBI:57945"/>
        <dbReference type="ChEBI" id="CHEBI:58351"/>
        <dbReference type="ChEBI" id="CHEBI:58827"/>
        <dbReference type="EC" id="1.3.1.76"/>
    </reaction>
</comment>
<comment type="catalytic activity">
    <reaction evidence="1">
        <text>siroheme + 2 H(+) = sirohydrochlorin + Fe(2+)</text>
        <dbReference type="Rhea" id="RHEA:24360"/>
        <dbReference type="ChEBI" id="CHEBI:15378"/>
        <dbReference type="ChEBI" id="CHEBI:29033"/>
        <dbReference type="ChEBI" id="CHEBI:58351"/>
        <dbReference type="ChEBI" id="CHEBI:60052"/>
        <dbReference type="EC" id="4.99.1.4"/>
    </reaction>
</comment>
<comment type="pathway">
    <text evidence="1">Cofactor biosynthesis; adenosylcobalamin biosynthesis; precorrin-2 from uroporphyrinogen III: step 1/1.</text>
</comment>
<comment type="pathway">
    <text evidence="1">Cofactor biosynthesis; adenosylcobalamin biosynthesis; sirohydrochlorin from precorrin-2: step 1/1.</text>
</comment>
<comment type="pathway">
    <text evidence="1">Porphyrin-containing compound metabolism; siroheme biosynthesis; precorrin-2 from uroporphyrinogen III: step 1/1.</text>
</comment>
<comment type="pathway">
    <text evidence="1">Porphyrin-containing compound metabolism; siroheme biosynthesis; siroheme from sirohydrochlorin: step 1/1.</text>
</comment>
<comment type="pathway">
    <text evidence="1">Porphyrin-containing compound metabolism; siroheme biosynthesis; sirohydrochlorin from precorrin-2: step 1/1.</text>
</comment>
<comment type="similarity">
    <text evidence="1">In the N-terminal section; belongs to the precorrin-2 dehydrogenase / sirohydrochlorin ferrochelatase family.</text>
</comment>
<comment type="similarity">
    <text evidence="1">In the C-terminal section; belongs to the precorrin methyltransferase family.</text>
</comment>
<keyword id="KW-0169">Cobalamin biosynthesis</keyword>
<keyword id="KW-0456">Lyase</keyword>
<keyword id="KW-0489">Methyltransferase</keyword>
<keyword id="KW-0511">Multifunctional enzyme</keyword>
<keyword id="KW-0520">NAD</keyword>
<keyword id="KW-0560">Oxidoreductase</keyword>
<keyword id="KW-0597">Phosphoprotein</keyword>
<keyword id="KW-0627">Porphyrin biosynthesis</keyword>
<keyword id="KW-1185">Reference proteome</keyword>
<keyword id="KW-0949">S-adenosyl-L-methionine</keyword>
<keyword id="KW-0808">Transferase</keyword>
<feature type="chain" id="PRO_0000330517" description="Siroheme synthase 2">
    <location>
        <begin position="1"/>
        <end position="495"/>
    </location>
</feature>
<feature type="region of interest" description="Precorrin-2 dehydrogenase /sirohydrochlorin ferrochelatase" evidence="1">
    <location>
        <begin position="1"/>
        <end position="205"/>
    </location>
</feature>
<feature type="region of interest" description="Uroporphyrinogen-III C-methyltransferase" evidence="1">
    <location>
        <begin position="220"/>
        <end position="495"/>
    </location>
</feature>
<feature type="region of interest" description="Disordered" evidence="2">
    <location>
        <begin position="471"/>
        <end position="495"/>
    </location>
</feature>
<feature type="active site" description="Proton acceptor" evidence="1">
    <location>
        <position position="252"/>
    </location>
</feature>
<feature type="active site" description="Proton donor" evidence="1">
    <location>
        <position position="274"/>
    </location>
</feature>
<feature type="binding site" evidence="1">
    <location>
        <begin position="22"/>
        <end position="23"/>
    </location>
    <ligand>
        <name>NAD(+)</name>
        <dbReference type="ChEBI" id="CHEBI:57540"/>
    </ligand>
</feature>
<feature type="binding site" evidence="1">
    <location>
        <begin position="43"/>
        <end position="44"/>
    </location>
    <ligand>
        <name>NAD(+)</name>
        <dbReference type="ChEBI" id="CHEBI:57540"/>
    </ligand>
</feature>
<feature type="binding site" evidence="1">
    <location>
        <position position="229"/>
    </location>
    <ligand>
        <name>S-adenosyl-L-methionine</name>
        <dbReference type="ChEBI" id="CHEBI:59789"/>
    </ligand>
</feature>
<feature type="binding site" evidence="1">
    <location>
        <begin position="305"/>
        <end position="307"/>
    </location>
    <ligand>
        <name>S-adenosyl-L-methionine</name>
        <dbReference type="ChEBI" id="CHEBI:59789"/>
    </ligand>
</feature>
<feature type="binding site" evidence="1">
    <location>
        <position position="310"/>
    </location>
    <ligand>
        <name>S-adenosyl-L-methionine</name>
        <dbReference type="ChEBI" id="CHEBI:59789"/>
    </ligand>
</feature>
<feature type="binding site" evidence="1">
    <location>
        <begin position="335"/>
        <end position="336"/>
    </location>
    <ligand>
        <name>S-adenosyl-L-methionine</name>
        <dbReference type="ChEBI" id="CHEBI:59789"/>
    </ligand>
</feature>
<feature type="binding site" evidence="1">
    <location>
        <position position="387"/>
    </location>
    <ligand>
        <name>S-adenosyl-L-methionine</name>
        <dbReference type="ChEBI" id="CHEBI:59789"/>
    </ligand>
</feature>
<feature type="binding site" evidence="1">
    <location>
        <position position="416"/>
    </location>
    <ligand>
        <name>S-adenosyl-L-methionine</name>
        <dbReference type="ChEBI" id="CHEBI:59789"/>
    </ligand>
</feature>
<feature type="modified residue" description="Phosphoserine" evidence="1">
    <location>
        <position position="130"/>
    </location>
</feature>
<sequence length="495" mass="53848">MDHYPIFLNLHGRHCVVIGGNETAARKGEDLLDSGAIITLIAPDLGGDCEDLLQRYPDRAHHRAEDYKPGMEQGAALVLSASGHDATDRLVYRQCTRLGIPVNTVDRPEYCSYITPAVVDRSPLQVAITSGGAAPVLARQVRSQIETLLPTAYGRLAALAGRLRERVAAVLPTGRQRLRFWEQVFDGPAAESMLAGREREAEQAMLELLRREQARRDERGEVYLVGAGPGDPDLLTFRALRLMQRADVVLYDHLAAPGLLRLVRKDAERIPVGKRRGQHTLPQEAINDKLIELAAAGKRVLRLKGGDPFIFGRGGEEIEGLIEHGIPFQVVPAVTAAQGAAAYAGIPLTHRDHAQSCRFLTGHRRHGALELGQWAPFRSDETLVVYMGLTHLETVSAQLQAGGLPPDQPAAAVDQATTPAQRVITAPLAELPERVRTARLQGPALIVVGATVTLQPQLGWYHSSPNAEPAFPEHGCLRGEPRPTRHPAPADTEQA</sequence>
<gene>
    <name evidence="1" type="primary">cysG2</name>
    <name type="ordered locus">Hhal_1933</name>
</gene>
<proteinExistence type="inferred from homology"/>
<accession>A1WYD5</accession>
<name>CYSG2_HALHL</name>
<dbReference type="EC" id="2.1.1.107" evidence="1"/>
<dbReference type="EC" id="1.3.1.76" evidence="1"/>
<dbReference type="EC" id="4.99.1.4" evidence="1"/>
<dbReference type="EMBL" id="CP000544">
    <property type="protein sequence ID" value="ABM62697.1"/>
    <property type="molecule type" value="Genomic_DNA"/>
</dbReference>
<dbReference type="RefSeq" id="WP_011814719.1">
    <property type="nucleotide sequence ID" value="NC_008789.1"/>
</dbReference>
<dbReference type="SMR" id="A1WYD5"/>
<dbReference type="STRING" id="349124.Hhal_1933"/>
<dbReference type="KEGG" id="hha:Hhal_1933"/>
<dbReference type="eggNOG" id="COG0007">
    <property type="taxonomic scope" value="Bacteria"/>
</dbReference>
<dbReference type="eggNOG" id="COG1648">
    <property type="taxonomic scope" value="Bacteria"/>
</dbReference>
<dbReference type="HOGENOM" id="CLU_011276_2_2_6"/>
<dbReference type="OrthoDB" id="9815856at2"/>
<dbReference type="UniPathway" id="UPA00148">
    <property type="reaction ID" value="UER00211"/>
</dbReference>
<dbReference type="UniPathway" id="UPA00148">
    <property type="reaction ID" value="UER00222"/>
</dbReference>
<dbReference type="UniPathway" id="UPA00262">
    <property type="reaction ID" value="UER00211"/>
</dbReference>
<dbReference type="UniPathway" id="UPA00262">
    <property type="reaction ID" value="UER00222"/>
</dbReference>
<dbReference type="UniPathway" id="UPA00262">
    <property type="reaction ID" value="UER00376"/>
</dbReference>
<dbReference type="Proteomes" id="UP000000647">
    <property type="component" value="Chromosome"/>
</dbReference>
<dbReference type="GO" id="GO:0051287">
    <property type="term" value="F:NAD binding"/>
    <property type="evidence" value="ECO:0007669"/>
    <property type="project" value="InterPro"/>
</dbReference>
<dbReference type="GO" id="GO:0043115">
    <property type="term" value="F:precorrin-2 dehydrogenase activity"/>
    <property type="evidence" value="ECO:0007669"/>
    <property type="project" value="UniProtKB-UniRule"/>
</dbReference>
<dbReference type="GO" id="GO:0051266">
    <property type="term" value="F:sirohydrochlorin ferrochelatase activity"/>
    <property type="evidence" value="ECO:0007669"/>
    <property type="project" value="UniProtKB-EC"/>
</dbReference>
<dbReference type="GO" id="GO:0004851">
    <property type="term" value="F:uroporphyrin-III C-methyltransferase activity"/>
    <property type="evidence" value="ECO:0007669"/>
    <property type="project" value="UniProtKB-UniRule"/>
</dbReference>
<dbReference type="GO" id="GO:0009236">
    <property type="term" value="P:cobalamin biosynthetic process"/>
    <property type="evidence" value="ECO:0007669"/>
    <property type="project" value="UniProtKB-UniRule"/>
</dbReference>
<dbReference type="GO" id="GO:0032259">
    <property type="term" value="P:methylation"/>
    <property type="evidence" value="ECO:0007669"/>
    <property type="project" value="UniProtKB-KW"/>
</dbReference>
<dbReference type="GO" id="GO:0019354">
    <property type="term" value="P:siroheme biosynthetic process"/>
    <property type="evidence" value="ECO:0007669"/>
    <property type="project" value="UniProtKB-UniRule"/>
</dbReference>
<dbReference type="CDD" id="cd11642">
    <property type="entry name" value="SUMT"/>
    <property type="match status" value="1"/>
</dbReference>
<dbReference type="FunFam" id="3.30.950.10:FF:000001">
    <property type="entry name" value="Siroheme synthase"/>
    <property type="match status" value="1"/>
</dbReference>
<dbReference type="FunFam" id="3.40.1010.10:FF:000001">
    <property type="entry name" value="Siroheme synthase"/>
    <property type="match status" value="1"/>
</dbReference>
<dbReference type="Gene3D" id="3.40.1010.10">
    <property type="entry name" value="Cobalt-precorrin-4 Transmethylase, Domain 1"/>
    <property type="match status" value="1"/>
</dbReference>
<dbReference type="Gene3D" id="3.30.950.10">
    <property type="entry name" value="Methyltransferase, Cobalt-precorrin-4 Transmethylase, Domain 2"/>
    <property type="match status" value="1"/>
</dbReference>
<dbReference type="Gene3D" id="3.40.50.720">
    <property type="entry name" value="NAD(P)-binding Rossmann-like Domain"/>
    <property type="match status" value="1"/>
</dbReference>
<dbReference type="Gene3D" id="1.10.8.210">
    <property type="entry name" value="Sirohaem synthase, dimerisation domain"/>
    <property type="match status" value="1"/>
</dbReference>
<dbReference type="Gene3D" id="3.30.160.110">
    <property type="entry name" value="Siroheme synthase, domain 2"/>
    <property type="match status" value="1"/>
</dbReference>
<dbReference type="HAMAP" id="MF_01646">
    <property type="entry name" value="Siroheme_synth"/>
    <property type="match status" value="1"/>
</dbReference>
<dbReference type="InterPro" id="IPR000878">
    <property type="entry name" value="4pyrrol_Mease"/>
</dbReference>
<dbReference type="InterPro" id="IPR035996">
    <property type="entry name" value="4pyrrol_Methylase_sf"/>
</dbReference>
<dbReference type="InterPro" id="IPR014777">
    <property type="entry name" value="4pyrrole_Mease_sub1"/>
</dbReference>
<dbReference type="InterPro" id="IPR014776">
    <property type="entry name" value="4pyrrole_Mease_sub2"/>
</dbReference>
<dbReference type="InterPro" id="IPR006366">
    <property type="entry name" value="CobA/CysG_C"/>
</dbReference>
<dbReference type="InterPro" id="IPR036291">
    <property type="entry name" value="NAD(P)-bd_dom_sf"/>
</dbReference>
<dbReference type="InterPro" id="IPR050161">
    <property type="entry name" value="Siro_Cobalamin_biosynth"/>
</dbReference>
<dbReference type="InterPro" id="IPR037115">
    <property type="entry name" value="Sirohaem_synt_dimer_dom_sf"/>
</dbReference>
<dbReference type="InterPro" id="IPR012409">
    <property type="entry name" value="Sirohaem_synth"/>
</dbReference>
<dbReference type="InterPro" id="IPR028281">
    <property type="entry name" value="Sirohaem_synthase_central"/>
</dbReference>
<dbReference type="InterPro" id="IPR019478">
    <property type="entry name" value="Sirohaem_synthase_dimer_dom"/>
</dbReference>
<dbReference type="InterPro" id="IPR006367">
    <property type="entry name" value="Sirohaem_synthase_N"/>
</dbReference>
<dbReference type="NCBIfam" id="TIGR01469">
    <property type="entry name" value="cobA_cysG_Cterm"/>
    <property type="match status" value="1"/>
</dbReference>
<dbReference type="NCBIfam" id="TIGR01470">
    <property type="entry name" value="cysG_Nterm"/>
    <property type="match status" value="1"/>
</dbReference>
<dbReference type="NCBIfam" id="NF004790">
    <property type="entry name" value="PRK06136.1"/>
    <property type="match status" value="1"/>
</dbReference>
<dbReference type="NCBIfam" id="NF007922">
    <property type="entry name" value="PRK10637.1"/>
    <property type="match status" value="1"/>
</dbReference>
<dbReference type="PANTHER" id="PTHR45790:SF1">
    <property type="entry name" value="SIROHEME SYNTHASE"/>
    <property type="match status" value="1"/>
</dbReference>
<dbReference type="PANTHER" id="PTHR45790">
    <property type="entry name" value="SIROHEME SYNTHASE-RELATED"/>
    <property type="match status" value="1"/>
</dbReference>
<dbReference type="Pfam" id="PF10414">
    <property type="entry name" value="CysG_dimeriser"/>
    <property type="match status" value="1"/>
</dbReference>
<dbReference type="Pfam" id="PF13241">
    <property type="entry name" value="NAD_binding_7"/>
    <property type="match status" value="1"/>
</dbReference>
<dbReference type="Pfam" id="PF14824">
    <property type="entry name" value="Sirohm_synth_M"/>
    <property type="match status" value="1"/>
</dbReference>
<dbReference type="Pfam" id="PF00590">
    <property type="entry name" value="TP_methylase"/>
    <property type="match status" value="1"/>
</dbReference>
<dbReference type="PIRSF" id="PIRSF036426">
    <property type="entry name" value="Sirohaem_synth"/>
    <property type="match status" value="1"/>
</dbReference>
<dbReference type="SUPFAM" id="SSF51735">
    <property type="entry name" value="NAD(P)-binding Rossmann-fold domains"/>
    <property type="match status" value="1"/>
</dbReference>
<dbReference type="SUPFAM" id="SSF75615">
    <property type="entry name" value="Siroheme synthase middle domains-like"/>
    <property type="match status" value="1"/>
</dbReference>
<dbReference type="SUPFAM" id="SSF53790">
    <property type="entry name" value="Tetrapyrrole methylase"/>
    <property type="match status" value="1"/>
</dbReference>
<evidence type="ECO:0000255" key="1">
    <source>
        <dbReference type="HAMAP-Rule" id="MF_01646"/>
    </source>
</evidence>
<evidence type="ECO:0000256" key="2">
    <source>
        <dbReference type="SAM" id="MobiDB-lite"/>
    </source>
</evidence>
<protein>
    <recommendedName>
        <fullName evidence="1">Siroheme synthase 2</fullName>
    </recommendedName>
    <domain>
        <recommendedName>
            <fullName evidence="1">Uroporphyrinogen-III C-methyltransferase 2</fullName>
            <shortName evidence="1">Urogen III methylase 2</shortName>
            <ecNumber evidence="1">2.1.1.107</ecNumber>
        </recommendedName>
        <alternativeName>
            <fullName evidence="1">SUMT 2</fullName>
        </alternativeName>
        <alternativeName>
            <fullName evidence="1">Uroporphyrinogen III methylase 2</fullName>
            <shortName evidence="1">UROM 2</shortName>
        </alternativeName>
    </domain>
    <domain>
        <recommendedName>
            <fullName evidence="1">Precorrin-2 dehydrogenase 2</fullName>
            <ecNumber evidence="1">1.3.1.76</ecNumber>
        </recommendedName>
    </domain>
    <domain>
        <recommendedName>
            <fullName evidence="1">Sirohydrochlorin ferrochelatase 2</fullName>
            <ecNumber evidence="1">4.99.1.4</ecNumber>
        </recommendedName>
    </domain>
</protein>
<reference key="1">
    <citation type="submission" date="2006-12" db="EMBL/GenBank/DDBJ databases">
        <title>Complete sequence of Halorhodospira halophila SL1.</title>
        <authorList>
            <consortium name="US DOE Joint Genome Institute"/>
            <person name="Copeland A."/>
            <person name="Lucas S."/>
            <person name="Lapidus A."/>
            <person name="Barry K."/>
            <person name="Detter J.C."/>
            <person name="Glavina del Rio T."/>
            <person name="Hammon N."/>
            <person name="Israni S."/>
            <person name="Dalin E."/>
            <person name="Tice H."/>
            <person name="Pitluck S."/>
            <person name="Saunders E."/>
            <person name="Brettin T."/>
            <person name="Bruce D."/>
            <person name="Han C."/>
            <person name="Tapia R."/>
            <person name="Schmutz J."/>
            <person name="Larimer F."/>
            <person name="Land M."/>
            <person name="Hauser L."/>
            <person name="Kyrpides N."/>
            <person name="Mikhailova N."/>
            <person name="Hoff W."/>
            <person name="Richardson P."/>
        </authorList>
    </citation>
    <scope>NUCLEOTIDE SEQUENCE [LARGE SCALE GENOMIC DNA]</scope>
    <source>
        <strain>DSM 244 / SL1</strain>
    </source>
</reference>